<evidence type="ECO:0000255" key="1">
    <source>
        <dbReference type="HAMAP-Rule" id="MF_01966"/>
    </source>
</evidence>
<sequence length="228" mass="23247">MDIERVEQVRAVERLAHRRGLALMPRAGLAAADFVAARLPAGAQVLALAGPGNNGGDALVAATLLQARGYRVAVVMPAGPARLPDDARRAWQDWCAAGGQASADLPAHAPALVIDGLFGIGLARPLDGAWQGLIDQVNAWRVPVLALDVPSGLSAASGQPLGDPPGRPVRATWTLSFIGVPAALRAPGAAAWCGEQYLSLLGLTPAFLAEAVGPCGQATATAARRSGP</sequence>
<feature type="chain" id="PRO_0000416347" description="NAD(P)H-hydrate epimerase">
    <location>
        <begin position="1"/>
        <end position="228"/>
    </location>
</feature>
<feature type="domain" description="YjeF N-terminal" evidence="1">
    <location>
        <begin position="9"/>
        <end position="209"/>
    </location>
</feature>
<feature type="binding site" evidence="1">
    <location>
        <begin position="53"/>
        <end position="57"/>
    </location>
    <ligand>
        <name>(6S)-NADPHX</name>
        <dbReference type="ChEBI" id="CHEBI:64076"/>
    </ligand>
</feature>
<feature type="binding site" evidence="1">
    <location>
        <position position="54"/>
    </location>
    <ligand>
        <name>K(+)</name>
        <dbReference type="ChEBI" id="CHEBI:29103"/>
    </ligand>
</feature>
<feature type="binding site" evidence="1">
    <location>
        <position position="115"/>
    </location>
    <ligand>
        <name>K(+)</name>
        <dbReference type="ChEBI" id="CHEBI:29103"/>
    </ligand>
</feature>
<feature type="binding site" evidence="1">
    <location>
        <begin position="119"/>
        <end position="125"/>
    </location>
    <ligand>
        <name>(6S)-NADPHX</name>
        <dbReference type="ChEBI" id="CHEBI:64076"/>
    </ligand>
</feature>
<feature type="binding site" evidence="1">
    <location>
        <position position="148"/>
    </location>
    <ligand>
        <name>(6S)-NADPHX</name>
        <dbReference type="ChEBI" id="CHEBI:64076"/>
    </ligand>
</feature>
<feature type="binding site" evidence="1">
    <location>
        <position position="151"/>
    </location>
    <ligand>
        <name>K(+)</name>
        <dbReference type="ChEBI" id="CHEBI:29103"/>
    </ligand>
</feature>
<dbReference type="EC" id="5.1.99.6" evidence="1"/>
<dbReference type="EMBL" id="CP002695">
    <property type="protein sequence ID" value="AEE67905.1"/>
    <property type="molecule type" value="Genomic_DNA"/>
</dbReference>
<dbReference type="RefSeq" id="WP_003813302.1">
    <property type="nucleotide sequence ID" value="NZ_CP086368.1"/>
</dbReference>
<dbReference type="SMR" id="F4LHM0"/>
<dbReference type="KEGG" id="bpc:BPTD_2643"/>
<dbReference type="PATRIC" id="fig|1017264.3.peg.2837"/>
<dbReference type="HOGENOM" id="CLU_024853_0_2_4"/>
<dbReference type="GO" id="GO:0046872">
    <property type="term" value="F:metal ion binding"/>
    <property type="evidence" value="ECO:0007669"/>
    <property type="project" value="UniProtKB-KW"/>
</dbReference>
<dbReference type="GO" id="GO:0052856">
    <property type="term" value="F:NAD(P)HX epimerase activity"/>
    <property type="evidence" value="ECO:0007669"/>
    <property type="project" value="UniProtKB-UniRule"/>
</dbReference>
<dbReference type="GO" id="GO:0000166">
    <property type="term" value="F:nucleotide binding"/>
    <property type="evidence" value="ECO:0007669"/>
    <property type="project" value="UniProtKB-KW"/>
</dbReference>
<dbReference type="Gene3D" id="3.40.50.10260">
    <property type="entry name" value="YjeF N-terminal domain"/>
    <property type="match status" value="1"/>
</dbReference>
<dbReference type="HAMAP" id="MF_01966">
    <property type="entry name" value="NADHX_epimerase"/>
    <property type="match status" value="1"/>
</dbReference>
<dbReference type="InterPro" id="IPR004443">
    <property type="entry name" value="YjeF_N_dom"/>
</dbReference>
<dbReference type="InterPro" id="IPR036652">
    <property type="entry name" value="YjeF_N_dom_sf"/>
</dbReference>
<dbReference type="NCBIfam" id="TIGR00197">
    <property type="entry name" value="yjeF_nterm"/>
    <property type="match status" value="1"/>
</dbReference>
<dbReference type="Pfam" id="PF03853">
    <property type="entry name" value="YjeF_N"/>
    <property type="match status" value="1"/>
</dbReference>
<dbReference type="SUPFAM" id="SSF64153">
    <property type="entry name" value="YjeF N-terminal domain-like"/>
    <property type="match status" value="1"/>
</dbReference>
<dbReference type="PROSITE" id="PS51385">
    <property type="entry name" value="YJEF_N"/>
    <property type="match status" value="1"/>
</dbReference>
<protein>
    <recommendedName>
        <fullName evidence="1">NAD(P)H-hydrate epimerase</fullName>
        <ecNumber evidence="1">5.1.99.6</ecNumber>
    </recommendedName>
    <alternativeName>
        <fullName evidence="1">NAD(P)HX epimerase</fullName>
    </alternativeName>
</protein>
<accession>F4LHM0</accession>
<keyword id="KW-0413">Isomerase</keyword>
<keyword id="KW-0479">Metal-binding</keyword>
<keyword id="KW-0520">NAD</keyword>
<keyword id="KW-0521">NADP</keyword>
<keyword id="KW-0547">Nucleotide-binding</keyword>
<keyword id="KW-0630">Potassium</keyword>
<organism>
    <name type="scientific">Bordetella pertussis (strain CS)</name>
    <dbReference type="NCBI Taxonomy" id="1017264"/>
    <lineage>
        <taxon>Bacteria</taxon>
        <taxon>Pseudomonadati</taxon>
        <taxon>Pseudomonadota</taxon>
        <taxon>Betaproteobacteria</taxon>
        <taxon>Burkholderiales</taxon>
        <taxon>Alcaligenaceae</taxon>
        <taxon>Bordetella</taxon>
    </lineage>
</organism>
<gene>
    <name evidence="1" type="primary">nnrE</name>
    <name type="ordered locus">BPTD_2643</name>
</gene>
<comment type="function">
    <text evidence="1">Catalyzes the epimerization of the S- and R-forms of NAD(P)HX, a damaged form of NAD(P)H that is a result of enzymatic or heat-dependent hydration. This is a prerequisite for the S-specific NAD(P)H-hydrate dehydratase to allow the repair of both epimers of NAD(P)HX.</text>
</comment>
<comment type="catalytic activity">
    <reaction evidence="1">
        <text>(6R)-NADHX = (6S)-NADHX</text>
        <dbReference type="Rhea" id="RHEA:32215"/>
        <dbReference type="ChEBI" id="CHEBI:64074"/>
        <dbReference type="ChEBI" id="CHEBI:64075"/>
        <dbReference type="EC" id="5.1.99.6"/>
    </reaction>
</comment>
<comment type="catalytic activity">
    <reaction evidence="1">
        <text>(6R)-NADPHX = (6S)-NADPHX</text>
        <dbReference type="Rhea" id="RHEA:32227"/>
        <dbReference type="ChEBI" id="CHEBI:64076"/>
        <dbReference type="ChEBI" id="CHEBI:64077"/>
        <dbReference type="EC" id="5.1.99.6"/>
    </reaction>
</comment>
<comment type="cofactor">
    <cofactor evidence="1">
        <name>K(+)</name>
        <dbReference type="ChEBI" id="CHEBI:29103"/>
    </cofactor>
    <text evidence="1">Binds 1 potassium ion per subunit.</text>
</comment>
<comment type="similarity">
    <text evidence="1">Belongs to the NnrE/AIBP family.</text>
</comment>
<proteinExistence type="inferred from homology"/>
<reference key="1">
    <citation type="journal article" date="2011" name="J. Bacteriol.">
        <title>Complete genome sequence of B. pertussis CS, Chinese pertussis vaccine strain.</title>
        <authorList>
            <person name="Zhang S."/>
            <person name="Xu Y."/>
            <person name="Zhou Z."/>
            <person name="Wang S."/>
            <person name="Yang R."/>
            <person name="Wang J."/>
            <person name="Wang L."/>
        </authorList>
    </citation>
    <scope>NUCLEOTIDE SEQUENCE [LARGE SCALE GENOMIC DNA]</scope>
    <source>
        <strain>CS</strain>
    </source>
</reference>
<name>NNRE_BORPC</name>